<feature type="chain" id="PRO_0000334594" description="Aspartate carbamoyltransferase catalytic subunit 2">
    <location>
        <begin position="1"/>
        <end position="310"/>
    </location>
</feature>
<feature type="binding site" evidence="1">
    <location>
        <position position="55"/>
    </location>
    <ligand>
        <name>carbamoyl phosphate</name>
        <dbReference type="ChEBI" id="CHEBI:58228"/>
    </ligand>
</feature>
<feature type="binding site" evidence="1">
    <location>
        <position position="56"/>
    </location>
    <ligand>
        <name>carbamoyl phosphate</name>
        <dbReference type="ChEBI" id="CHEBI:58228"/>
    </ligand>
</feature>
<feature type="binding site" evidence="1">
    <location>
        <position position="85"/>
    </location>
    <ligand>
        <name>L-aspartate</name>
        <dbReference type="ChEBI" id="CHEBI:29991"/>
    </ligand>
</feature>
<feature type="binding site" evidence="1">
    <location>
        <position position="106"/>
    </location>
    <ligand>
        <name>carbamoyl phosphate</name>
        <dbReference type="ChEBI" id="CHEBI:58228"/>
    </ligand>
</feature>
<feature type="binding site" evidence="1">
    <location>
        <position position="134"/>
    </location>
    <ligand>
        <name>carbamoyl phosphate</name>
        <dbReference type="ChEBI" id="CHEBI:58228"/>
    </ligand>
</feature>
<feature type="binding site" evidence="1">
    <location>
        <position position="137"/>
    </location>
    <ligand>
        <name>carbamoyl phosphate</name>
        <dbReference type="ChEBI" id="CHEBI:58228"/>
    </ligand>
</feature>
<feature type="binding site" evidence="1">
    <location>
        <position position="167"/>
    </location>
    <ligand>
        <name>L-aspartate</name>
        <dbReference type="ChEBI" id="CHEBI:29991"/>
    </ligand>
</feature>
<feature type="binding site" evidence="1">
    <location>
        <position position="228"/>
    </location>
    <ligand>
        <name>L-aspartate</name>
        <dbReference type="ChEBI" id="CHEBI:29991"/>
    </ligand>
</feature>
<feature type="binding site" evidence="1">
    <location>
        <position position="266"/>
    </location>
    <ligand>
        <name>carbamoyl phosphate</name>
        <dbReference type="ChEBI" id="CHEBI:58228"/>
    </ligand>
</feature>
<feature type="binding site" evidence="1">
    <location>
        <position position="267"/>
    </location>
    <ligand>
        <name>carbamoyl phosphate</name>
        <dbReference type="ChEBI" id="CHEBI:58228"/>
    </ligand>
</feature>
<comment type="function">
    <text evidence="1">Catalyzes the condensation of carbamoyl phosphate and aspartate to form carbamoyl aspartate and inorganic phosphate, the committed step in the de novo pyrimidine nucleotide biosynthesis pathway.</text>
</comment>
<comment type="catalytic activity">
    <reaction evidence="1">
        <text>carbamoyl phosphate + L-aspartate = N-carbamoyl-L-aspartate + phosphate + H(+)</text>
        <dbReference type="Rhea" id="RHEA:20013"/>
        <dbReference type="ChEBI" id="CHEBI:15378"/>
        <dbReference type="ChEBI" id="CHEBI:29991"/>
        <dbReference type="ChEBI" id="CHEBI:32814"/>
        <dbReference type="ChEBI" id="CHEBI:43474"/>
        <dbReference type="ChEBI" id="CHEBI:58228"/>
        <dbReference type="EC" id="2.1.3.2"/>
    </reaction>
</comment>
<comment type="pathway">
    <text evidence="1">Pyrimidine metabolism; UMP biosynthesis via de novo pathway; (S)-dihydroorotate from bicarbonate: step 2/3.</text>
</comment>
<comment type="subunit">
    <text evidence="1">Heterododecamer (2C3:3R2) of six catalytic PyrB chains organized as two trimers (C3), and six regulatory PyrI chains organized as three dimers (R2).</text>
</comment>
<comment type="similarity">
    <text evidence="1">Belongs to the aspartate/ornithine carbamoyltransferase superfamily. ATCase family.</text>
</comment>
<sequence>MTNTIYNKNIISISDLSRSELELIVATANELKQNPRPELLKNKVVASCFFEASTRTRLSFETAVQRLGGSIIGFPDGGNTSLGKKGETLADSVQVISSYCDAFFIRHNQEGAARLASEFSSVPVINGGDGSNQHPTQTLLDLFSIYETQGTLEKLQVAFVGDLKYGRTVHSLTQALSLFDCEFHFVAPKALLMPDYIIDELKEKGCKYTLHETLDEIMDSLDILYMTRVQKERFDETEYQHLKSSFILTANMLKGVKDNLKILHPLPRVDEITTDVDSTPYAYYFQQAKNGVYARQALLTLVLTNEFGDL</sequence>
<protein>
    <recommendedName>
        <fullName evidence="1">Aspartate carbamoyltransferase catalytic subunit 2</fullName>
        <ecNumber evidence="1">2.1.3.2</ecNumber>
    </recommendedName>
    <alternativeName>
        <fullName evidence="1">Aspartate transcarbamylase 2</fullName>
        <shortName evidence="1">ATCase 2</shortName>
    </alternativeName>
</protein>
<dbReference type="EC" id="2.1.3.2" evidence="1"/>
<dbReference type="EMBL" id="CP000931">
    <property type="protein sequence ID" value="ABZ75258.1"/>
    <property type="molecule type" value="Genomic_DNA"/>
</dbReference>
<dbReference type="RefSeq" id="WP_012275812.1">
    <property type="nucleotide sequence ID" value="NC_010334.1"/>
</dbReference>
<dbReference type="SMR" id="B0TST3"/>
<dbReference type="STRING" id="458817.Shal_0683"/>
<dbReference type="KEGG" id="shl:Shal_0683"/>
<dbReference type="eggNOG" id="COG0540">
    <property type="taxonomic scope" value="Bacteria"/>
</dbReference>
<dbReference type="HOGENOM" id="CLU_043846_1_2_6"/>
<dbReference type="OrthoDB" id="9774690at2"/>
<dbReference type="UniPathway" id="UPA00070">
    <property type="reaction ID" value="UER00116"/>
</dbReference>
<dbReference type="Proteomes" id="UP000001317">
    <property type="component" value="Chromosome"/>
</dbReference>
<dbReference type="GO" id="GO:0005829">
    <property type="term" value="C:cytosol"/>
    <property type="evidence" value="ECO:0007669"/>
    <property type="project" value="TreeGrafter"/>
</dbReference>
<dbReference type="GO" id="GO:0016597">
    <property type="term" value="F:amino acid binding"/>
    <property type="evidence" value="ECO:0007669"/>
    <property type="project" value="InterPro"/>
</dbReference>
<dbReference type="GO" id="GO:0004070">
    <property type="term" value="F:aspartate carbamoyltransferase activity"/>
    <property type="evidence" value="ECO:0007669"/>
    <property type="project" value="UniProtKB-UniRule"/>
</dbReference>
<dbReference type="GO" id="GO:0006207">
    <property type="term" value="P:'de novo' pyrimidine nucleobase biosynthetic process"/>
    <property type="evidence" value="ECO:0007669"/>
    <property type="project" value="InterPro"/>
</dbReference>
<dbReference type="GO" id="GO:0044205">
    <property type="term" value="P:'de novo' UMP biosynthetic process"/>
    <property type="evidence" value="ECO:0007669"/>
    <property type="project" value="UniProtKB-UniRule"/>
</dbReference>
<dbReference type="GO" id="GO:0006520">
    <property type="term" value="P:amino acid metabolic process"/>
    <property type="evidence" value="ECO:0007669"/>
    <property type="project" value="InterPro"/>
</dbReference>
<dbReference type="FunFam" id="3.40.50.1370:FF:000001">
    <property type="entry name" value="Aspartate carbamoyltransferase"/>
    <property type="match status" value="1"/>
</dbReference>
<dbReference type="FunFam" id="3.40.50.1370:FF:000002">
    <property type="entry name" value="Aspartate carbamoyltransferase 2"/>
    <property type="match status" value="1"/>
</dbReference>
<dbReference type="Gene3D" id="3.40.50.1370">
    <property type="entry name" value="Aspartate/ornithine carbamoyltransferase"/>
    <property type="match status" value="2"/>
</dbReference>
<dbReference type="HAMAP" id="MF_00001">
    <property type="entry name" value="Asp_carb_tr"/>
    <property type="match status" value="1"/>
</dbReference>
<dbReference type="InterPro" id="IPR006132">
    <property type="entry name" value="Asp/Orn_carbamoyltranf_P-bd"/>
</dbReference>
<dbReference type="InterPro" id="IPR006130">
    <property type="entry name" value="Asp/Orn_carbamoylTrfase"/>
</dbReference>
<dbReference type="InterPro" id="IPR036901">
    <property type="entry name" value="Asp/Orn_carbamoylTrfase_sf"/>
</dbReference>
<dbReference type="InterPro" id="IPR002082">
    <property type="entry name" value="Asp_carbamoyltransf"/>
</dbReference>
<dbReference type="InterPro" id="IPR006131">
    <property type="entry name" value="Asp_carbamoyltransf_Asp/Orn-bd"/>
</dbReference>
<dbReference type="NCBIfam" id="TIGR00670">
    <property type="entry name" value="asp_carb_tr"/>
    <property type="match status" value="1"/>
</dbReference>
<dbReference type="NCBIfam" id="NF002032">
    <property type="entry name" value="PRK00856.1"/>
    <property type="match status" value="1"/>
</dbReference>
<dbReference type="PANTHER" id="PTHR45753:SF6">
    <property type="entry name" value="ASPARTATE CARBAMOYLTRANSFERASE"/>
    <property type="match status" value="1"/>
</dbReference>
<dbReference type="PANTHER" id="PTHR45753">
    <property type="entry name" value="ORNITHINE CARBAMOYLTRANSFERASE, MITOCHONDRIAL"/>
    <property type="match status" value="1"/>
</dbReference>
<dbReference type="Pfam" id="PF00185">
    <property type="entry name" value="OTCace"/>
    <property type="match status" value="1"/>
</dbReference>
<dbReference type="Pfam" id="PF02729">
    <property type="entry name" value="OTCace_N"/>
    <property type="match status" value="1"/>
</dbReference>
<dbReference type="PRINTS" id="PR00100">
    <property type="entry name" value="AOTCASE"/>
</dbReference>
<dbReference type="PRINTS" id="PR00101">
    <property type="entry name" value="ATCASE"/>
</dbReference>
<dbReference type="SUPFAM" id="SSF53671">
    <property type="entry name" value="Aspartate/ornithine carbamoyltransferase"/>
    <property type="match status" value="1"/>
</dbReference>
<dbReference type="PROSITE" id="PS00097">
    <property type="entry name" value="CARBAMOYLTRANSFERASE"/>
    <property type="match status" value="1"/>
</dbReference>
<keyword id="KW-0665">Pyrimidine biosynthesis</keyword>
<keyword id="KW-0808">Transferase</keyword>
<organism>
    <name type="scientific">Shewanella halifaxensis (strain HAW-EB4)</name>
    <dbReference type="NCBI Taxonomy" id="458817"/>
    <lineage>
        <taxon>Bacteria</taxon>
        <taxon>Pseudomonadati</taxon>
        <taxon>Pseudomonadota</taxon>
        <taxon>Gammaproteobacteria</taxon>
        <taxon>Alteromonadales</taxon>
        <taxon>Shewanellaceae</taxon>
        <taxon>Shewanella</taxon>
    </lineage>
</organism>
<proteinExistence type="inferred from homology"/>
<gene>
    <name evidence="1" type="primary">pyrB2</name>
    <name type="ordered locus">Shal_0683</name>
</gene>
<name>PYRB2_SHEHH</name>
<reference key="1">
    <citation type="submission" date="2008-01" db="EMBL/GenBank/DDBJ databases">
        <title>Complete sequence of Shewanella halifaxensis HAW-EB4.</title>
        <authorList>
            <consortium name="US DOE Joint Genome Institute"/>
            <person name="Copeland A."/>
            <person name="Lucas S."/>
            <person name="Lapidus A."/>
            <person name="Glavina del Rio T."/>
            <person name="Dalin E."/>
            <person name="Tice H."/>
            <person name="Bruce D."/>
            <person name="Goodwin L."/>
            <person name="Pitluck S."/>
            <person name="Sims D."/>
            <person name="Brettin T."/>
            <person name="Detter J.C."/>
            <person name="Han C."/>
            <person name="Kuske C.R."/>
            <person name="Schmutz J."/>
            <person name="Larimer F."/>
            <person name="Land M."/>
            <person name="Hauser L."/>
            <person name="Kyrpides N."/>
            <person name="Kim E."/>
            <person name="Zhao J.-S."/>
            <person name="Richardson P."/>
        </authorList>
    </citation>
    <scope>NUCLEOTIDE SEQUENCE [LARGE SCALE GENOMIC DNA]</scope>
    <source>
        <strain>HAW-EB4</strain>
    </source>
</reference>
<evidence type="ECO:0000255" key="1">
    <source>
        <dbReference type="HAMAP-Rule" id="MF_00001"/>
    </source>
</evidence>
<accession>B0TST3</accession>